<comment type="function">
    <text evidence="1">An essential GTPase which binds GTP, GDP and possibly (p)ppGpp with moderate affinity, with high nucleotide exchange rates and a fairly low GTP hydrolysis rate. Plays a role in control of the cell cycle, stress response, ribosome biogenesis and in those bacteria that undergo differentiation, in morphogenesis control.</text>
</comment>
<comment type="cofactor">
    <cofactor evidence="1">
        <name>Mg(2+)</name>
        <dbReference type="ChEBI" id="CHEBI:18420"/>
    </cofactor>
</comment>
<comment type="subunit">
    <text evidence="1">Monomer.</text>
</comment>
<comment type="subcellular location">
    <subcellularLocation>
        <location evidence="1">Cytoplasm</location>
    </subcellularLocation>
</comment>
<comment type="similarity">
    <text evidence="1">Belongs to the TRAFAC class OBG-HflX-like GTPase superfamily. OBG GTPase family.</text>
</comment>
<sequence length="435" mass="48542">MNIERADFVDRVKIFVKAGDGGNGCVSFRREKYVPKGGPDGGDGGDGGFVFLRANPSVSTLIEFVNKRKFVAENGKHGMGKKMKGRNGKDLFIDVPVGTVVKDAVTGEIIADLNEPGKIVCVARGGKGGRGNAHFATSTKQAPLIAERGEKGESRWLELELKILADVGLVGYPNVGKSSLISRISNARPKIANYPFTTLIPNLGVVKYDDFSFVVADIPGLIEGASEGVGLGNVFLRHVERCYLIAHVIDVSGYEREDPVRDYFVIREEMKKYSPFLLEKPEIVVANKIDLIGKEELEKILKRLRDATNREVIPVSALTGEGIDLLVSKLASIVREMKVEKSERKEEKFVKPSPVWRRLPEKFHLEVVKEDEGYWVVEGENLRVWIERFDLNQRDARLMLLQVLEKNGLNNKLKEAGVKEGDVVRIGDFEFEYRE</sequence>
<protein>
    <recommendedName>
        <fullName evidence="1">GTPase Obg</fullName>
        <ecNumber evidence="1">3.6.5.-</ecNumber>
    </recommendedName>
    <alternativeName>
        <fullName evidence="1">GTP-binding protein Obg</fullName>
    </alternativeName>
</protein>
<reference key="1">
    <citation type="journal article" date="2011" name="J. Bacteriol.">
        <title>Genome sequence of Thermotoga sp. strain RQ2, a hyperthermophilic bacterium isolated from a geothermally heated region of the seafloor near Ribeira Quente, the Azores.</title>
        <authorList>
            <person name="Swithers K.S."/>
            <person name="DiPippo J.L."/>
            <person name="Bruce D.C."/>
            <person name="Detter C."/>
            <person name="Tapia R."/>
            <person name="Han S."/>
            <person name="Saunders E."/>
            <person name="Goodwin L.A."/>
            <person name="Han J."/>
            <person name="Woyke T."/>
            <person name="Pitluck S."/>
            <person name="Pennacchio L."/>
            <person name="Nolan M."/>
            <person name="Mikhailova N."/>
            <person name="Lykidis A."/>
            <person name="Land M.L."/>
            <person name="Brettin T."/>
            <person name="Stetter K.O."/>
            <person name="Nelson K.E."/>
            <person name="Gogarten J.P."/>
            <person name="Noll K.M."/>
        </authorList>
    </citation>
    <scope>NUCLEOTIDE SEQUENCE [LARGE SCALE GENOMIC DNA]</scope>
    <source>
        <strain>RQ2</strain>
    </source>
</reference>
<evidence type="ECO:0000255" key="1">
    <source>
        <dbReference type="HAMAP-Rule" id="MF_01454"/>
    </source>
</evidence>
<evidence type="ECO:0000255" key="2">
    <source>
        <dbReference type="PROSITE-ProRule" id="PRU01229"/>
    </source>
</evidence>
<evidence type="ECO:0000255" key="3">
    <source>
        <dbReference type="PROSITE-ProRule" id="PRU01231"/>
    </source>
</evidence>
<name>OBG_THESQ</name>
<dbReference type="EC" id="3.6.5.-" evidence="1"/>
<dbReference type="EMBL" id="CP000969">
    <property type="protein sequence ID" value="ACB09201.1"/>
    <property type="molecule type" value="Genomic_DNA"/>
</dbReference>
<dbReference type="SMR" id="B1LA53"/>
<dbReference type="KEGG" id="trq:TRQ2_0849"/>
<dbReference type="HOGENOM" id="CLU_011747_2_1_0"/>
<dbReference type="Proteomes" id="UP000001687">
    <property type="component" value="Chromosome"/>
</dbReference>
<dbReference type="GO" id="GO:0005737">
    <property type="term" value="C:cytoplasm"/>
    <property type="evidence" value="ECO:0007669"/>
    <property type="project" value="UniProtKB-SubCell"/>
</dbReference>
<dbReference type="GO" id="GO:0005525">
    <property type="term" value="F:GTP binding"/>
    <property type="evidence" value="ECO:0007669"/>
    <property type="project" value="UniProtKB-UniRule"/>
</dbReference>
<dbReference type="GO" id="GO:0003924">
    <property type="term" value="F:GTPase activity"/>
    <property type="evidence" value="ECO:0007669"/>
    <property type="project" value="UniProtKB-UniRule"/>
</dbReference>
<dbReference type="GO" id="GO:0000287">
    <property type="term" value="F:magnesium ion binding"/>
    <property type="evidence" value="ECO:0007669"/>
    <property type="project" value="InterPro"/>
</dbReference>
<dbReference type="GO" id="GO:0042254">
    <property type="term" value="P:ribosome biogenesis"/>
    <property type="evidence" value="ECO:0007669"/>
    <property type="project" value="UniProtKB-UniRule"/>
</dbReference>
<dbReference type="CDD" id="cd01898">
    <property type="entry name" value="Obg"/>
    <property type="match status" value="1"/>
</dbReference>
<dbReference type="FunFam" id="2.70.210.12:FF:000001">
    <property type="entry name" value="GTPase Obg"/>
    <property type="match status" value="1"/>
</dbReference>
<dbReference type="Gene3D" id="3.30.300.350">
    <property type="entry name" value="GTP-binding protein OBG, C-terminal domain"/>
    <property type="match status" value="1"/>
</dbReference>
<dbReference type="Gene3D" id="2.70.210.12">
    <property type="entry name" value="GTP1/OBG domain"/>
    <property type="match status" value="1"/>
</dbReference>
<dbReference type="Gene3D" id="3.40.50.300">
    <property type="entry name" value="P-loop containing nucleotide triphosphate hydrolases"/>
    <property type="match status" value="1"/>
</dbReference>
<dbReference type="HAMAP" id="MF_01454">
    <property type="entry name" value="GTPase_Obg"/>
    <property type="match status" value="1"/>
</dbReference>
<dbReference type="InterPro" id="IPR031167">
    <property type="entry name" value="G_OBG"/>
</dbReference>
<dbReference type="InterPro" id="IPR006073">
    <property type="entry name" value="GTP-bd"/>
</dbReference>
<dbReference type="InterPro" id="IPR014100">
    <property type="entry name" value="GTP-bd_Obg/CgtA"/>
</dbReference>
<dbReference type="InterPro" id="IPR036346">
    <property type="entry name" value="GTP-bd_prot_GTP1/OBG_C_sf"/>
</dbReference>
<dbReference type="InterPro" id="IPR006074">
    <property type="entry name" value="GTP1-OBG_CS"/>
</dbReference>
<dbReference type="InterPro" id="IPR006169">
    <property type="entry name" value="GTP1_OBG_dom"/>
</dbReference>
<dbReference type="InterPro" id="IPR036726">
    <property type="entry name" value="GTP1_OBG_dom_sf"/>
</dbReference>
<dbReference type="InterPro" id="IPR045086">
    <property type="entry name" value="OBG_GTPase"/>
</dbReference>
<dbReference type="InterPro" id="IPR015349">
    <property type="entry name" value="OCT_dom"/>
</dbReference>
<dbReference type="InterPro" id="IPR027417">
    <property type="entry name" value="P-loop_NTPase"/>
</dbReference>
<dbReference type="InterPro" id="IPR005225">
    <property type="entry name" value="Small_GTP-bd"/>
</dbReference>
<dbReference type="NCBIfam" id="TIGR02729">
    <property type="entry name" value="Obg_CgtA"/>
    <property type="match status" value="1"/>
</dbReference>
<dbReference type="NCBIfam" id="TIGR03595">
    <property type="entry name" value="Obg_CgtA_exten"/>
    <property type="match status" value="1"/>
</dbReference>
<dbReference type="NCBIfam" id="NF008954">
    <property type="entry name" value="PRK12296.1"/>
    <property type="match status" value="1"/>
</dbReference>
<dbReference type="NCBIfam" id="NF008955">
    <property type="entry name" value="PRK12297.1"/>
    <property type="match status" value="1"/>
</dbReference>
<dbReference type="NCBIfam" id="NF008956">
    <property type="entry name" value="PRK12299.1"/>
    <property type="match status" value="1"/>
</dbReference>
<dbReference type="NCBIfam" id="TIGR00231">
    <property type="entry name" value="small_GTP"/>
    <property type="match status" value="1"/>
</dbReference>
<dbReference type="PANTHER" id="PTHR11702">
    <property type="entry name" value="DEVELOPMENTALLY REGULATED GTP-BINDING PROTEIN-RELATED"/>
    <property type="match status" value="1"/>
</dbReference>
<dbReference type="PANTHER" id="PTHR11702:SF31">
    <property type="entry name" value="MITOCHONDRIAL RIBOSOME-ASSOCIATED GTPASE 2"/>
    <property type="match status" value="1"/>
</dbReference>
<dbReference type="Pfam" id="PF09269">
    <property type="entry name" value="DUF1967"/>
    <property type="match status" value="1"/>
</dbReference>
<dbReference type="Pfam" id="PF01018">
    <property type="entry name" value="GTP1_OBG"/>
    <property type="match status" value="1"/>
</dbReference>
<dbReference type="Pfam" id="PF01926">
    <property type="entry name" value="MMR_HSR1"/>
    <property type="match status" value="1"/>
</dbReference>
<dbReference type="PIRSF" id="PIRSF002401">
    <property type="entry name" value="GTP_bd_Obg/CgtA"/>
    <property type="match status" value="1"/>
</dbReference>
<dbReference type="PRINTS" id="PR00326">
    <property type="entry name" value="GTP1OBG"/>
</dbReference>
<dbReference type="SUPFAM" id="SSF102741">
    <property type="entry name" value="Obg GTP-binding protein C-terminal domain"/>
    <property type="match status" value="1"/>
</dbReference>
<dbReference type="SUPFAM" id="SSF82051">
    <property type="entry name" value="Obg GTP-binding protein N-terminal domain"/>
    <property type="match status" value="1"/>
</dbReference>
<dbReference type="SUPFAM" id="SSF52540">
    <property type="entry name" value="P-loop containing nucleoside triphosphate hydrolases"/>
    <property type="match status" value="1"/>
</dbReference>
<dbReference type="PROSITE" id="PS51710">
    <property type="entry name" value="G_OBG"/>
    <property type="match status" value="1"/>
</dbReference>
<dbReference type="PROSITE" id="PS00905">
    <property type="entry name" value="GTP1_OBG"/>
    <property type="match status" value="1"/>
</dbReference>
<dbReference type="PROSITE" id="PS51883">
    <property type="entry name" value="OBG"/>
    <property type="match status" value="1"/>
</dbReference>
<dbReference type="PROSITE" id="PS51881">
    <property type="entry name" value="OCT"/>
    <property type="match status" value="1"/>
</dbReference>
<feature type="chain" id="PRO_0000386359" description="GTPase Obg">
    <location>
        <begin position="1"/>
        <end position="435"/>
    </location>
</feature>
<feature type="domain" description="Obg" evidence="3">
    <location>
        <begin position="6"/>
        <end position="164"/>
    </location>
</feature>
<feature type="domain" description="OBG-type G" evidence="1">
    <location>
        <begin position="165"/>
        <end position="335"/>
    </location>
</feature>
<feature type="domain" description="OCT" evidence="2">
    <location>
        <begin position="357"/>
        <end position="435"/>
    </location>
</feature>
<feature type="binding site" evidence="1">
    <location>
        <begin position="171"/>
        <end position="178"/>
    </location>
    <ligand>
        <name>GTP</name>
        <dbReference type="ChEBI" id="CHEBI:37565"/>
    </ligand>
</feature>
<feature type="binding site" evidence="1">
    <location>
        <position position="178"/>
    </location>
    <ligand>
        <name>Mg(2+)</name>
        <dbReference type="ChEBI" id="CHEBI:18420"/>
    </ligand>
</feature>
<feature type="binding site" evidence="1">
    <location>
        <begin position="196"/>
        <end position="200"/>
    </location>
    <ligand>
        <name>GTP</name>
        <dbReference type="ChEBI" id="CHEBI:37565"/>
    </ligand>
</feature>
<feature type="binding site" evidence="1">
    <location>
        <position position="198"/>
    </location>
    <ligand>
        <name>Mg(2+)</name>
        <dbReference type="ChEBI" id="CHEBI:18420"/>
    </ligand>
</feature>
<feature type="binding site" evidence="1">
    <location>
        <begin position="217"/>
        <end position="220"/>
    </location>
    <ligand>
        <name>GTP</name>
        <dbReference type="ChEBI" id="CHEBI:37565"/>
    </ligand>
</feature>
<feature type="binding site" evidence="1">
    <location>
        <begin position="287"/>
        <end position="290"/>
    </location>
    <ligand>
        <name>GTP</name>
        <dbReference type="ChEBI" id="CHEBI:37565"/>
    </ligand>
</feature>
<feature type="binding site" evidence="1">
    <location>
        <begin position="316"/>
        <end position="318"/>
    </location>
    <ligand>
        <name>GTP</name>
        <dbReference type="ChEBI" id="CHEBI:37565"/>
    </ligand>
</feature>
<gene>
    <name evidence="1" type="primary">obg</name>
    <name type="ordered locus">TRQ2_0849</name>
</gene>
<accession>B1LA53</accession>
<keyword id="KW-0963">Cytoplasm</keyword>
<keyword id="KW-0342">GTP-binding</keyword>
<keyword id="KW-0378">Hydrolase</keyword>
<keyword id="KW-0460">Magnesium</keyword>
<keyword id="KW-0479">Metal-binding</keyword>
<keyword id="KW-0547">Nucleotide-binding</keyword>
<organism>
    <name type="scientific">Thermotoga sp. (strain RQ2)</name>
    <dbReference type="NCBI Taxonomy" id="126740"/>
    <lineage>
        <taxon>Bacteria</taxon>
        <taxon>Thermotogati</taxon>
        <taxon>Thermotogota</taxon>
        <taxon>Thermotogae</taxon>
        <taxon>Thermotogales</taxon>
        <taxon>Thermotogaceae</taxon>
        <taxon>Thermotoga</taxon>
    </lineage>
</organism>
<proteinExistence type="inferred from homology"/>